<organism>
    <name type="scientific">Allochromatium vinosum (strain ATCC 17899 / DSM 180 / NBRC 103801 / NCIMB 10441 / D)</name>
    <name type="common">Chromatium vinosum</name>
    <dbReference type="NCBI Taxonomy" id="572477"/>
    <lineage>
        <taxon>Bacteria</taxon>
        <taxon>Pseudomonadati</taxon>
        <taxon>Pseudomonadota</taxon>
        <taxon>Gammaproteobacteria</taxon>
        <taxon>Chromatiales</taxon>
        <taxon>Chromatiaceae</taxon>
        <taxon>Allochromatium</taxon>
    </lineage>
</organism>
<feature type="initiator methionine" description="Removed" evidence="6">
    <location>
        <position position="1"/>
    </location>
</feature>
<feature type="chain" id="PRO_0000159127" description="Ferredoxin">
    <location>
        <begin position="2"/>
        <end position="83"/>
    </location>
</feature>
<feature type="domain" description="4Fe-4S ferredoxin-type 1" evidence="1">
    <location>
        <begin position="2"/>
        <end position="29"/>
    </location>
</feature>
<feature type="domain" description="4Fe-4S ferredoxin-type 2" evidence="1">
    <location>
        <begin position="31"/>
        <end position="64"/>
    </location>
</feature>
<feature type="binding site" evidence="2 5 10 11 12">
    <location>
        <position position="9"/>
    </location>
    <ligand>
        <name>[4Fe-4S] cluster</name>
        <dbReference type="ChEBI" id="CHEBI:49883"/>
        <label>1</label>
    </ligand>
</feature>
<feature type="binding site" evidence="2 5 10 11 12">
    <location>
        <position position="12"/>
    </location>
    <ligand>
        <name>[4Fe-4S] cluster</name>
        <dbReference type="ChEBI" id="CHEBI:49883"/>
        <label>1</label>
    </ligand>
</feature>
<feature type="binding site" evidence="2 5 10 11 12">
    <location>
        <position position="15"/>
    </location>
    <ligand>
        <name>[4Fe-4S] cluster</name>
        <dbReference type="ChEBI" id="CHEBI:49883"/>
        <label>1</label>
    </ligand>
</feature>
<feature type="binding site" evidence="2 5 10 11 12">
    <location>
        <position position="19"/>
    </location>
    <ligand>
        <name>[4Fe-4S] cluster</name>
        <dbReference type="ChEBI" id="CHEBI:49883"/>
        <label>2</label>
    </ligand>
</feature>
<feature type="binding site" evidence="2 5 10 11 12">
    <location>
        <position position="38"/>
    </location>
    <ligand>
        <name>[4Fe-4S] cluster</name>
        <dbReference type="ChEBI" id="CHEBI:49883"/>
        <label>2</label>
    </ligand>
</feature>
<feature type="binding site" evidence="2 5 10 11 12">
    <location>
        <position position="41"/>
    </location>
    <ligand>
        <name>[4Fe-4S] cluster</name>
        <dbReference type="ChEBI" id="CHEBI:49883"/>
        <label>2</label>
    </ligand>
</feature>
<feature type="binding site" evidence="2 5 10 11 12">
    <location>
        <position position="50"/>
    </location>
    <ligand>
        <name>[4Fe-4S] cluster</name>
        <dbReference type="ChEBI" id="CHEBI:49883"/>
        <label>2</label>
    </ligand>
</feature>
<feature type="binding site" evidence="2 5 10 11 12">
    <location>
        <position position="54"/>
    </location>
    <ligand>
        <name>[4Fe-4S] cluster</name>
        <dbReference type="ChEBI" id="CHEBI:49883"/>
        <label>1</label>
    </ligand>
</feature>
<feature type="mutagenesis site" description="Increases the reduction potential of cluster 1 by approximately 50 mV." evidence="2">
    <original>V</original>
    <variation>G</variation>
    <location>
        <position position="14"/>
    </location>
</feature>
<feature type="mutagenesis site" description="Increases the reduction potential of cluster 1 by approximately 50 mV." evidence="2">
    <original>C</original>
    <variation>A</variation>
    <location>
        <position position="58"/>
    </location>
</feature>
<feature type="mutagenesis site" description="No change in the reduction potential values of the clusters." evidence="2">
    <original>C</original>
    <variation>S</variation>
    <location>
        <position position="58"/>
    </location>
</feature>
<feature type="sequence conflict" description="In Ref. 3; AA sequence." evidence="8" ref="3">
    <original>E</original>
    <variation>Q</variation>
    <location>
        <position position="8"/>
    </location>
</feature>
<feature type="sequence conflict" description="In Ref. 3; AA sequence." evidence="8" ref="3">
    <original>D</original>
    <variation>N</variation>
    <location>
        <position position="13"/>
    </location>
</feature>
<feature type="sequence conflict" description="In Ref. 3; AA sequence." evidence="8" ref="3">
    <original>E</original>
    <variation>Q</variation>
    <location>
        <position position="16"/>
    </location>
</feature>
<feature type="strand" evidence="13">
    <location>
        <begin position="3"/>
        <end position="5"/>
    </location>
</feature>
<feature type="helix" evidence="13">
    <location>
        <begin position="16"/>
        <end position="18"/>
    </location>
</feature>
<feature type="strand" evidence="13">
    <location>
        <begin position="24"/>
        <end position="26"/>
    </location>
</feature>
<feature type="strand" evidence="13">
    <location>
        <begin position="28"/>
        <end position="33"/>
    </location>
</feature>
<feature type="helix" evidence="13">
    <location>
        <begin position="35"/>
        <end position="37"/>
    </location>
</feature>
<feature type="turn" evidence="13">
    <location>
        <begin position="40"/>
        <end position="44"/>
    </location>
</feature>
<feature type="helix" evidence="13">
    <location>
        <begin position="49"/>
        <end position="53"/>
    </location>
</feature>
<feature type="strand" evidence="13">
    <location>
        <begin position="59"/>
        <end position="61"/>
    </location>
</feature>
<feature type="helix" evidence="13">
    <location>
        <begin position="63"/>
        <end position="65"/>
    </location>
</feature>
<feature type="helix" evidence="13">
    <location>
        <begin position="69"/>
        <end position="80"/>
    </location>
</feature>
<comment type="function">
    <text evidence="9">Ferredoxins are iron-sulfur proteins that transfer electrons in a wide variety of metabolic reactions.</text>
</comment>
<comment type="cofactor">
    <cofactor evidence="2 4 5">
        <name>[4Fe-4S] cluster</name>
        <dbReference type="ChEBI" id="CHEBI:49883"/>
    </cofactor>
    <text evidence="2 4 5">Binds 2 [4Fe-4S] clusters.</text>
</comment>
<comment type="biophysicochemical properties">
    <redoxPotential>
        <text evidence="2 3">E(0) is -460 mV (PubMed:2387857). E(0) is -640 mV for the cluster 1, and -467 mV for the cluster 2 (PubMed:19290553).</text>
    </redoxPotential>
</comment>
<gene>
    <name type="primary">fdx</name>
    <name type="ordered locus">Alvin_2884</name>
</gene>
<proteinExistence type="evidence at protein level"/>
<dbReference type="EMBL" id="U45327">
    <property type="protein sequence ID" value="AAC44333.1"/>
    <property type="molecule type" value="Genomic_DNA"/>
</dbReference>
<dbReference type="EMBL" id="CP001896">
    <property type="protein sequence ID" value="ADC63789.1"/>
    <property type="molecule type" value="Genomic_DNA"/>
</dbReference>
<dbReference type="PIR" id="S72167">
    <property type="entry name" value="FEKRV"/>
</dbReference>
<dbReference type="RefSeq" id="WP_012972054.1">
    <property type="nucleotide sequence ID" value="NC_013851.1"/>
</dbReference>
<dbReference type="PDB" id="1BLU">
    <property type="method" value="X-ray"/>
    <property type="resolution" value="2.10 A"/>
    <property type="chains" value="A=2-83"/>
</dbReference>
<dbReference type="PDB" id="3EUN">
    <property type="method" value="X-ray"/>
    <property type="resolution" value="1.05 A"/>
    <property type="chains" value="A=2-83"/>
</dbReference>
<dbReference type="PDB" id="3EXY">
    <property type="method" value="X-ray"/>
    <property type="resolution" value="1.48 A"/>
    <property type="chains" value="A=2-83"/>
</dbReference>
<dbReference type="PDBsum" id="1BLU"/>
<dbReference type="PDBsum" id="3EUN"/>
<dbReference type="PDBsum" id="3EXY"/>
<dbReference type="SMR" id="P00208"/>
<dbReference type="STRING" id="572477.Alvin_2884"/>
<dbReference type="KEGG" id="alv:Alvin_2884"/>
<dbReference type="eggNOG" id="COG1145">
    <property type="taxonomic scope" value="Bacteria"/>
</dbReference>
<dbReference type="HOGENOM" id="CLU_139698_11_0_6"/>
<dbReference type="OrthoDB" id="9803397at2"/>
<dbReference type="EvolutionaryTrace" id="P00208"/>
<dbReference type="Proteomes" id="UP000001441">
    <property type="component" value="Chromosome"/>
</dbReference>
<dbReference type="GO" id="GO:0005737">
    <property type="term" value="C:cytoplasm"/>
    <property type="evidence" value="ECO:0007669"/>
    <property type="project" value="TreeGrafter"/>
</dbReference>
<dbReference type="GO" id="GO:0051539">
    <property type="term" value="F:4 iron, 4 sulfur cluster binding"/>
    <property type="evidence" value="ECO:0007669"/>
    <property type="project" value="UniProtKB-KW"/>
</dbReference>
<dbReference type="GO" id="GO:0046872">
    <property type="term" value="F:metal ion binding"/>
    <property type="evidence" value="ECO:0007669"/>
    <property type="project" value="UniProtKB-KW"/>
</dbReference>
<dbReference type="FunFam" id="3.30.70.20:FF:000045">
    <property type="entry name" value="Ferredoxin, 4Fe-4S"/>
    <property type="match status" value="1"/>
</dbReference>
<dbReference type="Gene3D" id="3.30.70.20">
    <property type="match status" value="1"/>
</dbReference>
<dbReference type="InterPro" id="IPR017896">
    <property type="entry name" value="4Fe4S_Fe-S-bd"/>
</dbReference>
<dbReference type="InterPro" id="IPR017900">
    <property type="entry name" value="4Fe4S_Fe_S_CS"/>
</dbReference>
<dbReference type="InterPro" id="IPR050157">
    <property type="entry name" value="PSI_iron-sulfur_center"/>
</dbReference>
<dbReference type="InterPro" id="IPR047927">
    <property type="entry name" value="YfhL-like"/>
</dbReference>
<dbReference type="NCBIfam" id="NF033683">
    <property type="entry name" value="di_4Fe-4S_YfhL"/>
    <property type="match status" value="1"/>
</dbReference>
<dbReference type="PANTHER" id="PTHR24960:SF79">
    <property type="entry name" value="PHOTOSYSTEM I IRON-SULFUR CENTER"/>
    <property type="match status" value="1"/>
</dbReference>
<dbReference type="PANTHER" id="PTHR24960">
    <property type="entry name" value="PHOTOSYSTEM I IRON-SULFUR CENTER-RELATED"/>
    <property type="match status" value="1"/>
</dbReference>
<dbReference type="Pfam" id="PF12838">
    <property type="entry name" value="Fer4_7"/>
    <property type="match status" value="1"/>
</dbReference>
<dbReference type="SUPFAM" id="SSF54862">
    <property type="entry name" value="4Fe-4S ferredoxins"/>
    <property type="match status" value="1"/>
</dbReference>
<dbReference type="PROSITE" id="PS00198">
    <property type="entry name" value="4FE4S_FER_1"/>
    <property type="match status" value="1"/>
</dbReference>
<dbReference type="PROSITE" id="PS51379">
    <property type="entry name" value="4FE4S_FER_2"/>
    <property type="match status" value="2"/>
</dbReference>
<name>FER_ALLVD</name>
<accession>P00208</accession>
<accession>D3RQV5</accession>
<accession>P71155</accession>
<evidence type="ECO:0000255" key="1">
    <source>
        <dbReference type="PROSITE-ProRule" id="PRU00711"/>
    </source>
</evidence>
<evidence type="ECO:0000269" key="2">
    <source>
    </source>
</evidence>
<evidence type="ECO:0000269" key="3">
    <source>
    </source>
</evidence>
<evidence type="ECO:0000269" key="4">
    <source>
    </source>
</evidence>
<evidence type="ECO:0000269" key="5">
    <source>
    </source>
</evidence>
<evidence type="ECO:0000269" key="6">
    <source>
    </source>
</evidence>
<evidence type="ECO:0000303" key="7">
    <source>
    </source>
</evidence>
<evidence type="ECO:0000305" key="8"/>
<evidence type="ECO:0000305" key="9">
    <source>
    </source>
</evidence>
<evidence type="ECO:0007744" key="10">
    <source>
        <dbReference type="PDB" id="1BLU"/>
    </source>
</evidence>
<evidence type="ECO:0007744" key="11">
    <source>
        <dbReference type="PDB" id="3EUN"/>
    </source>
</evidence>
<evidence type="ECO:0007744" key="12">
    <source>
        <dbReference type="PDB" id="3EXY"/>
    </source>
</evidence>
<evidence type="ECO:0007829" key="13">
    <source>
        <dbReference type="PDB" id="3EUN"/>
    </source>
</evidence>
<sequence>MALMITDECINCDVCEPECPNGAISQGDETYVIEPSLCTECVGHYETSQCVEVCPVDCIIKDPSHEETEDELRAKYERITGEG</sequence>
<protein>
    <recommendedName>
        <fullName evidence="8">Ferredoxin</fullName>
    </recommendedName>
    <alternativeName>
        <fullName evidence="7">2[4Fe-4S] ferredoxin</fullName>
    </alternativeName>
</protein>
<keyword id="KW-0002">3D-structure</keyword>
<keyword id="KW-0004">4Fe-4S</keyword>
<keyword id="KW-0903">Direct protein sequencing</keyword>
<keyword id="KW-0249">Electron transport</keyword>
<keyword id="KW-0408">Iron</keyword>
<keyword id="KW-0411">Iron-sulfur</keyword>
<keyword id="KW-0479">Metal-binding</keyword>
<keyword id="KW-1185">Reference proteome</keyword>
<keyword id="KW-0677">Repeat</keyword>
<keyword id="KW-0813">Transport</keyword>
<reference key="1">
    <citation type="journal article" date="1996" name="Biochim. Biophys. Acta">
        <title>Molecular cloning and expression of the gene encoding Chromatium vinosum 2[4Fe-4S] ferredoxin.</title>
        <authorList>
            <person name="Moulis J.-M."/>
        </authorList>
    </citation>
    <scope>NUCLEOTIDE SEQUENCE [GENOMIC DNA]</scope>
    <scope>COFACTOR</scope>
    <source>
        <strain>ATCC 17899 / DSM 180 / NBRC 103801 / NCIMB 10441 / D</strain>
    </source>
</reference>
<reference key="2">
    <citation type="journal article" date="2011" name="Stand. Genomic Sci.">
        <title>Complete genome sequence of Allochromatium vinosum DSM 180(T).</title>
        <authorList>
            <person name="Weissgerber T."/>
            <person name="Zigann R."/>
            <person name="Bruce D."/>
            <person name="Chang Y.J."/>
            <person name="Detter J.C."/>
            <person name="Han C."/>
            <person name="Hauser L."/>
            <person name="Jeffries C.D."/>
            <person name="Land M."/>
            <person name="Munk A.C."/>
            <person name="Tapia R."/>
            <person name="Dahl C."/>
        </authorList>
    </citation>
    <scope>NUCLEOTIDE SEQUENCE [LARGE SCALE GENOMIC DNA]</scope>
    <source>
        <strain>ATCC 17899 / DSM 180 / NBRC 103801 / NCIMB 10441 / D</strain>
    </source>
</reference>
<reference key="3">
    <citation type="journal article" date="1977" name="J. Biochem.">
        <title>Amino acid sequence of chromatium vinosum ferredoxin: revisions.</title>
        <authorList>
            <person name="Hase T."/>
            <person name="Matsubara H."/>
            <person name="Evans M.C.W."/>
        </authorList>
    </citation>
    <scope>PROTEIN SEQUENCE OF 2-83</scope>
</reference>
<reference key="4">
    <citation type="journal article" date="1990" name="J. Biol. Chem.">
        <title>Redox properties of several bacterial ferredoxins using square wave voltammetry.</title>
        <authorList>
            <person name="Smith E.T."/>
            <person name="Feinberg B.A."/>
        </authorList>
    </citation>
    <scope>FUNCTION</scope>
    <scope>BIOPHYSICOCHEMICAL PROPERTIES</scope>
</reference>
<reference evidence="10" key="5">
    <citation type="journal article" date="1996" name="Protein Sci.">
        <title>Crystal structure of the 2[4Fe-4S] ferredoxin from Chromatium vinosum: evolutionary and mechanistic inferences for [3/4Fe-4S] ferredoxins.</title>
        <authorList>
            <person name="Moulis J.-M."/>
            <person name="Sieker L.C."/>
            <person name="Wilson K.S."/>
            <person name="Dauter Z."/>
        </authorList>
    </citation>
    <scope>X-RAY CRYSTALLOGRAPHY (2.10 ANGSTROMS) OF 2-83 IN COMPLEX WITH IRON-SULFUR (4FE-4S)</scope>
    <scope>COFACTOR</scope>
</reference>
<reference evidence="11 12" key="6">
    <citation type="journal article" date="2009" name="J. Biol. Inorg. Chem.">
        <title>Insight into the protein and solvent contributions to the reduction potentials of [4Fe-4S]2+/+ clusters: crystal structures of the Allochromatium vinosum ferredoxin variants C57A and V13G and the homologous Escherichia coli ferredoxin.</title>
        <authorList>
            <person name="Saridakis E."/>
            <person name="Giastas P."/>
            <person name="Efthymiou G."/>
            <person name="Thoma V."/>
            <person name="Moulis J.M."/>
            <person name="Kyritsis P."/>
            <person name="Mavridis I.M."/>
        </authorList>
    </citation>
    <scope>X-RAY CRYSTALLOGRAPHY (1.05 ANGSTROMS) OF 2-83 OF MUTANTS GLY-14 AND ALA-58 IN COMPLEX WITH IRON-SULFUR (4FE-4S)</scope>
    <scope>COFACTOR</scope>
    <scope>BIOPHYSICOCHEMICAL PROPERTIES</scope>
    <scope>MUTAGENESIS OF VAL-14 AND CYS-58</scope>
</reference>